<evidence type="ECO:0000256" key="1">
    <source>
        <dbReference type="SAM" id="MobiDB-lite"/>
    </source>
</evidence>
<evidence type="ECO:0000269" key="2">
    <source>
    </source>
</evidence>
<evidence type="ECO:0000269" key="3">
    <source>
    </source>
</evidence>
<evidence type="ECO:0000269" key="4">
    <source>
    </source>
</evidence>
<evidence type="ECO:0000269" key="5">
    <source>
    </source>
</evidence>
<evidence type="ECO:0000269" key="6">
    <source>
    </source>
</evidence>
<evidence type="ECO:0000269" key="7">
    <source>
    </source>
</evidence>
<evidence type="ECO:0000269" key="8">
    <source>
    </source>
</evidence>
<evidence type="ECO:0000269" key="9">
    <source>
    </source>
</evidence>
<evidence type="ECO:0000269" key="10">
    <source>
    </source>
</evidence>
<evidence type="ECO:0000305" key="11"/>
<evidence type="ECO:0007829" key="12">
    <source>
        <dbReference type="PDB" id="4QTJ"/>
    </source>
</evidence>
<evidence type="ECO:0007829" key="13">
    <source>
        <dbReference type="PDB" id="4QTK"/>
    </source>
</evidence>
<gene>
    <name type="primary">WOR1</name>
    <name type="synonym">EAP2</name>
    <name type="synonym">TOS9</name>
    <name type="ordered locus">CAALFM_C110150WA</name>
    <name type="ORF">CaO19.12348</name>
    <name type="ORF">CaO19.4884</name>
</gene>
<accession>Q5AP80</accession>
<accession>A0A1D8PET0</accession>
<accession>Q5JB38</accession>
<protein>
    <recommendedName>
        <fullName>White-opaque regulator 1</fullName>
    </recommendedName>
</protein>
<sequence>MSNSSIVPTYNGYIHNTRDALAVIQQVLDKQLEPVSRRPHERERGVLIVSGSVFVFIEQSSGIKRWTDGISWSPSRIQGRFLVYGELDKKNLIDKDKKKKKKRKFGPDDEYDHNVNEPDYTGGYGNHLHNDNRSHLNKNSRSGPMLLATGTGSITHTVIENKPSSSASMIHSNVIPASSSFLTDYRTSLGNGPMVSAAISQNGLVKKTITLTTTTKELHMEGKAEKQTIHLISYYSKQDIDSGKLQRPSESDLKHVQISPALWTMVQENSLGGKAPIDDEECFIVDGHNQYTNVSYIQQQQQQHQLQHQPLLHHSSSVAGSTTSIVNNSLSISNGGYGNNYSKNLSRSYNKYSNSQVSQLSYMLPPQTESSSTATIASGASVSVKREDDTNNGSNAPTGNENQYVNAINHSHTSSYGGQGYATDATGIATPAYNSYSQANTSINTSSQQQQQLQQGQYGQYVQYGVAPSTISGATSTNNNSGNAPNIPQDVYYSHYTGFVQPHYPQYHIATGNASDQYNTNAANHQYHSNNTTSSANNNSSSRTTGVGSKRKPSIVSNSTSGSVSGGNGNGNNYGYNSNSSTSTNRPPAVSTNTTSTTSGGSSFSGPSSNITTNSMSNNPWFNSSTNMAVNSSYITSSGGGNSHGGIGNNEYEPMPMTNNSASIPAYYQQHVPSHVGSAQQHQSQQQVAGVGAPHIIHNHPYLHPTYGQGSNSASTGDNSTPGGSSGSGSGGSGNNGAGGSSSVAATSGVTSSNTSGNIVTNGTLVAAGTDDAVGNSSGSYYTGT</sequence>
<proteinExistence type="evidence at protein level"/>
<comment type="function">
    <text evidence="2 3 4 5 6 7 8 9 10">Master transcriptional regulator of the switch between 2 heritable states, the white and opaque states. These 2 cell types differ in many characteristics, including cell structure, mating competence, and virulence. Each state is heritable for many generations, and switching between states occurs stochastically, at low frequency. WOR1 Binds the intergenic regions upstream of the genes encoding three additional transcriptional regulators of white-opaque switching, CZF1, EFG1, and WOR2. Phenotypic switching from the white to the opaque phase is a necessary step for mating. Plays a role in cell adhesion and pseudohyphal growth.</text>
</comment>
<comment type="subcellular location">
    <subcellularLocation>
        <location evidence="5">Nucleus</location>
    </subcellularLocation>
</comment>
<comment type="induction">
    <text evidence="3 5">Only expressed in opaque cells, in which it forms a positive feedback loop since it binds its own DNA regulatory region and activates its own transcription leading to the accumulation of high levels of WOR1.</text>
</comment>
<comment type="similarity">
    <text evidence="11">Belongs to the MIT1/WOR1 family.</text>
</comment>
<dbReference type="EMBL" id="CP017623">
    <property type="protein sequence ID" value="AOW26645.1"/>
    <property type="molecule type" value="Genomic_DNA"/>
</dbReference>
<dbReference type="RefSeq" id="XP_723567.2">
    <property type="nucleotide sequence ID" value="XM_718474.2"/>
</dbReference>
<dbReference type="PDB" id="4QTJ">
    <property type="method" value="X-ray"/>
    <property type="resolution" value="2.10 A"/>
    <property type="chains" value="A=6-272"/>
</dbReference>
<dbReference type="PDB" id="4QTK">
    <property type="method" value="X-ray"/>
    <property type="resolution" value="2.99 A"/>
    <property type="chains" value="A/B=6-272"/>
</dbReference>
<dbReference type="PDBsum" id="4QTJ"/>
<dbReference type="PDBsum" id="4QTK"/>
<dbReference type="SMR" id="Q5AP80"/>
<dbReference type="BioGRID" id="1217875">
    <property type="interactions" value="105"/>
</dbReference>
<dbReference type="FunCoup" id="Q5AP80">
    <property type="interactions" value="114"/>
</dbReference>
<dbReference type="STRING" id="237561.Q5AP80"/>
<dbReference type="EnsemblFungi" id="C1_10150W_A-T">
    <property type="protein sequence ID" value="C1_10150W_A-T-p1"/>
    <property type="gene ID" value="C1_10150W_A"/>
</dbReference>
<dbReference type="GeneID" id="3634781"/>
<dbReference type="KEGG" id="cal:CAALFM_C110150WA"/>
<dbReference type="CGD" id="CAL0000193718">
    <property type="gene designation" value="WOR1"/>
</dbReference>
<dbReference type="VEuPathDB" id="FungiDB:C1_10150W_A"/>
<dbReference type="eggNOG" id="KOG4476">
    <property type="taxonomic scope" value="Eukaryota"/>
</dbReference>
<dbReference type="HOGENOM" id="CLU_356372_0_0_1"/>
<dbReference type="InParanoid" id="Q5AP80"/>
<dbReference type="OMA" id="VFVFIEQ"/>
<dbReference type="OrthoDB" id="5572844at2759"/>
<dbReference type="CD-CODE" id="1E246C77">
    <property type="entry name" value="Transcriptional condensate"/>
</dbReference>
<dbReference type="EvolutionaryTrace" id="Q5AP80"/>
<dbReference type="PRO" id="PR:Q5AP80"/>
<dbReference type="Proteomes" id="UP000000559">
    <property type="component" value="Chromosome 1"/>
</dbReference>
<dbReference type="GO" id="GO:0000785">
    <property type="term" value="C:chromatin"/>
    <property type="evidence" value="ECO:0000314"/>
    <property type="project" value="CGD"/>
</dbReference>
<dbReference type="GO" id="GO:0005634">
    <property type="term" value="C:nucleus"/>
    <property type="evidence" value="ECO:0000314"/>
    <property type="project" value="CGD"/>
</dbReference>
<dbReference type="GO" id="GO:0003677">
    <property type="term" value="F:DNA binding"/>
    <property type="evidence" value="ECO:0000314"/>
    <property type="project" value="CGD"/>
</dbReference>
<dbReference type="GO" id="GO:0003700">
    <property type="term" value="F:DNA-binding transcription factor activity"/>
    <property type="evidence" value="ECO:0000314"/>
    <property type="project" value="CGD"/>
</dbReference>
<dbReference type="GO" id="GO:0043565">
    <property type="term" value="F:sequence-specific DNA binding"/>
    <property type="evidence" value="ECO:0000314"/>
    <property type="project" value="CGD"/>
</dbReference>
<dbReference type="GO" id="GO:0044406">
    <property type="term" value="P:adhesion of symbiont to host"/>
    <property type="evidence" value="ECO:0000316"/>
    <property type="project" value="CGD"/>
</dbReference>
<dbReference type="GO" id="GO:0044403">
    <property type="term" value="P:biological process involved in symbiotic interaction"/>
    <property type="evidence" value="ECO:0000315"/>
    <property type="project" value="CGD"/>
</dbReference>
<dbReference type="GO" id="GO:0007155">
    <property type="term" value="P:cell adhesion"/>
    <property type="evidence" value="ECO:0000316"/>
    <property type="project" value="CGD"/>
</dbReference>
<dbReference type="GO" id="GO:0044182">
    <property type="term" value="P:filamentous growth of a population of unicellular organisms"/>
    <property type="evidence" value="ECO:0000315"/>
    <property type="project" value="CGD"/>
</dbReference>
<dbReference type="GO" id="GO:0007618">
    <property type="term" value="P:mating"/>
    <property type="evidence" value="ECO:0000315"/>
    <property type="project" value="CGD"/>
</dbReference>
<dbReference type="GO" id="GO:1990277">
    <property type="term" value="P:parasexual reproduction with cellular fusion"/>
    <property type="evidence" value="ECO:0000315"/>
    <property type="project" value="CGD"/>
</dbReference>
<dbReference type="GO" id="GO:0036166">
    <property type="term" value="P:phenotypic switching"/>
    <property type="evidence" value="ECO:0000315"/>
    <property type="project" value="CGD"/>
</dbReference>
<dbReference type="GO" id="GO:1900241">
    <property type="term" value="P:positive regulation of phenotypic switching"/>
    <property type="evidence" value="ECO:0000315"/>
    <property type="project" value="CGD"/>
</dbReference>
<dbReference type="GO" id="GO:0045944">
    <property type="term" value="P:positive regulation of transcription by RNA polymerase II"/>
    <property type="evidence" value="ECO:0000314"/>
    <property type="project" value="CGD"/>
</dbReference>
<dbReference type="GO" id="GO:0006355">
    <property type="term" value="P:regulation of DNA-templated transcription"/>
    <property type="evidence" value="ECO:0000315"/>
    <property type="project" value="CGD"/>
</dbReference>
<dbReference type="GO" id="GO:1900239">
    <property type="term" value="P:regulation of phenotypic switching"/>
    <property type="evidence" value="ECO:0000315"/>
    <property type="project" value="CGD"/>
</dbReference>
<dbReference type="GO" id="GO:1900231">
    <property type="term" value="P:regulation of single-species biofilm formation on inanimate substrate"/>
    <property type="evidence" value="ECO:0000315"/>
    <property type="project" value="CGD"/>
</dbReference>
<dbReference type="GO" id="GO:0044011">
    <property type="term" value="P:single-species biofilm formation on inanimate substrate"/>
    <property type="evidence" value="ECO:0000315"/>
    <property type="project" value="CGD"/>
</dbReference>
<dbReference type="InterPro" id="IPR018608">
    <property type="entry name" value="Gti1/Pac2"/>
</dbReference>
<dbReference type="PANTHER" id="PTHR28027">
    <property type="entry name" value="TRANSCRIPTIONAL REGULATOR MIT1"/>
    <property type="match status" value="1"/>
</dbReference>
<dbReference type="PANTHER" id="PTHR28027:SF2">
    <property type="entry name" value="TRANSCRIPTIONAL REGULATOR MIT1"/>
    <property type="match status" value="1"/>
</dbReference>
<dbReference type="Pfam" id="PF09729">
    <property type="entry name" value="Gti1_Pac2"/>
    <property type="match status" value="1"/>
</dbReference>
<reference key="1">
    <citation type="journal article" date="2004" name="Proc. Natl. Acad. Sci. U.S.A.">
        <title>The diploid genome sequence of Candida albicans.</title>
        <authorList>
            <person name="Jones T."/>
            <person name="Federspiel N.A."/>
            <person name="Chibana H."/>
            <person name="Dungan J."/>
            <person name="Kalman S."/>
            <person name="Magee B.B."/>
            <person name="Newport G."/>
            <person name="Thorstenson Y.R."/>
            <person name="Agabian N."/>
            <person name="Magee P.T."/>
            <person name="Davis R.W."/>
            <person name="Scherer S."/>
        </authorList>
    </citation>
    <scope>NUCLEOTIDE SEQUENCE [LARGE SCALE GENOMIC DNA]</scope>
    <source>
        <strain>SC5314 / ATCC MYA-2876</strain>
    </source>
</reference>
<reference key="2">
    <citation type="journal article" date="2007" name="Genome Biol.">
        <title>Assembly of the Candida albicans genome into sixteen supercontigs aligned on the eight chromosomes.</title>
        <authorList>
            <person name="van het Hoog M."/>
            <person name="Rast T.J."/>
            <person name="Martchenko M."/>
            <person name="Grindle S."/>
            <person name="Dignard D."/>
            <person name="Hogues H."/>
            <person name="Cuomo C."/>
            <person name="Berriman M."/>
            <person name="Scherer S."/>
            <person name="Magee B.B."/>
            <person name="Whiteway M."/>
            <person name="Chibana H."/>
            <person name="Nantel A."/>
            <person name="Magee P.T."/>
        </authorList>
    </citation>
    <scope>GENOME REANNOTATION</scope>
    <source>
        <strain>SC5314 / ATCC MYA-2876</strain>
    </source>
</reference>
<reference key="3">
    <citation type="journal article" date="2013" name="Genome Biol.">
        <title>Assembly of a phased diploid Candida albicans genome facilitates allele-specific measurements and provides a simple model for repeat and indel structure.</title>
        <authorList>
            <person name="Muzzey D."/>
            <person name="Schwartz K."/>
            <person name="Weissman J.S."/>
            <person name="Sherlock G."/>
        </authorList>
    </citation>
    <scope>NUCLEOTIDE SEQUENCE [LARGE SCALE GENOMIC DNA]</scope>
    <scope>GENOME REANNOTATION</scope>
    <source>
        <strain>SC5314 / ATCC MYA-2876</strain>
    </source>
</reference>
<reference key="4">
    <citation type="journal article" date="2005" name="Biotechnol. Prog.">
        <title>Identification of Candida albicans genes that induce Saccharomyces cerevisiae cell adhesion and morphogenesis.</title>
        <authorList>
            <person name="Li F."/>
            <person name="Palecek S.P."/>
        </authorList>
    </citation>
    <scope>FUNCTION</scope>
</reference>
<reference key="5">
    <citation type="journal article" date="2006" name="Eukaryot. Cell">
        <title>TOS9 regulates white-opaque switching in Candida albicans.</title>
        <authorList>
            <person name="Srikantha T."/>
            <person name="Borneman A.R."/>
            <person name="Daniels K.J."/>
            <person name="Pujol C."/>
            <person name="Wu W."/>
            <person name="Seringhaus M.R."/>
            <person name="Gerstein M."/>
            <person name="Yi S."/>
            <person name="Snyder M."/>
            <person name="Soll D.R."/>
        </authorList>
    </citation>
    <scope>FUNCTION</scope>
    <scope>INDUCTION</scope>
    <scope>SUBCELLULAR LOCATION</scope>
</reference>
<reference key="6">
    <citation type="journal article" date="2006" name="Proc. Natl. Acad. Sci. U.S.A.">
        <title>Epigenetic properties of white-opaque switching in Candida albicans are based on a self-sustaining transcriptional feedback loop.</title>
        <authorList>
            <person name="Zordan R.E."/>
            <person name="Galgoczy D.J."/>
            <person name="Johnson A.D."/>
        </authorList>
    </citation>
    <scope>FUNCTION</scope>
    <scope>INDUCTION</scope>
</reference>
<reference key="7">
    <citation type="journal article" date="2006" name="Proc. Natl. Acad. Sci. U.S.A.">
        <title>Bistable expression of WOR1, a master regulator of white-opaque switching in Candida albicans.</title>
        <authorList>
            <person name="Huang G."/>
            <person name="Wang H."/>
            <person name="Chou S."/>
            <person name="Nie X."/>
            <person name="Chen J."/>
            <person name="Liu H."/>
        </authorList>
    </citation>
    <scope>FUNCTION</scope>
</reference>
<reference key="8">
    <citation type="journal article" date="2007" name="PLoS Biol.">
        <title>Interlocking transcriptional feedback loops control white-opaque switching in Candida albicans.</title>
        <authorList>
            <person name="Zordan R.E."/>
            <person name="Miller M.G."/>
            <person name="Galgoczy D.J."/>
            <person name="Tuch B.B."/>
            <person name="Johnson A.D."/>
        </authorList>
    </citation>
    <scope>FUNCTION</scope>
    <scope>DNA-BINDING</scope>
</reference>
<reference key="9">
    <citation type="journal article" date="2008" name="PLoS Pathog.">
        <title>Environmental induction of white-opaque switching in Candida albicans.</title>
        <authorList>
            <person name="Ramirez-Zavala B."/>
            <person name="Reuss O."/>
            <person name="Park Y.N."/>
            <person name="Ohlsen K."/>
            <person name="Morschhauser J."/>
        </authorList>
    </citation>
    <scope>FUNCTION</scope>
</reference>
<reference key="10">
    <citation type="journal article" date="2010" name="Mol. Microbiol.">
        <title>Temporal anatomy of an epigenetic switch in cell programming: the white-opaque transition of C. albicans.</title>
        <authorList>
            <person name="Lohse M.B."/>
            <person name="Johnson A.D."/>
        </authorList>
    </citation>
    <scope>FUNCTION</scope>
</reference>
<reference key="11">
    <citation type="journal article" date="2012" name="Genetics">
        <title>A conserved transcriptional regulator governs fungal morphology in widely diverged species.</title>
        <authorList>
            <person name="Cain C.W."/>
            <person name="Lohse M.B."/>
            <person name="Homann O.R."/>
            <person name="Sil A."/>
            <person name="Johnson A.D."/>
        </authorList>
    </citation>
    <scope>FUNCTION</scope>
    <scope>DNA-BINDING</scope>
</reference>
<reference key="12">
    <citation type="journal article" date="2012" name="Mol. Biol. Cell">
        <title>The transcription factor Flo8 mediates CO2 sensing in the human fungal pathogen Candida albicans.</title>
        <authorList>
            <person name="Du H."/>
            <person name="Guan G."/>
            <person name="Xie J."/>
            <person name="Cottier F."/>
            <person name="Sun Y."/>
            <person name="Jia W."/>
            <person name="Muhlschlegel F.A."/>
            <person name="Huang G."/>
        </authorList>
    </citation>
    <scope>FUNCTION</scope>
</reference>
<organism>
    <name type="scientific">Candida albicans (strain SC5314 / ATCC MYA-2876)</name>
    <name type="common">Yeast</name>
    <dbReference type="NCBI Taxonomy" id="237561"/>
    <lineage>
        <taxon>Eukaryota</taxon>
        <taxon>Fungi</taxon>
        <taxon>Dikarya</taxon>
        <taxon>Ascomycota</taxon>
        <taxon>Saccharomycotina</taxon>
        <taxon>Pichiomycetes</taxon>
        <taxon>Debaryomycetaceae</taxon>
        <taxon>Candida/Lodderomyces clade</taxon>
        <taxon>Candida</taxon>
    </lineage>
</organism>
<keyword id="KW-0002">3D-structure</keyword>
<keyword id="KW-0130">Cell adhesion</keyword>
<keyword id="KW-0238">DNA-binding</keyword>
<keyword id="KW-0539">Nucleus</keyword>
<keyword id="KW-1185">Reference proteome</keyword>
<keyword id="KW-0804">Transcription</keyword>
<keyword id="KW-0805">Transcription regulation</keyword>
<keyword id="KW-0843">Virulence</keyword>
<name>WOR1_CANAL</name>
<feature type="chain" id="PRO_0000420153" description="White-opaque regulator 1">
    <location>
        <begin position="1"/>
        <end position="785"/>
    </location>
</feature>
<feature type="region of interest" description="Disordered" evidence="1">
    <location>
        <begin position="96"/>
        <end position="116"/>
    </location>
</feature>
<feature type="region of interest" description="Disordered" evidence="1">
    <location>
        <begin position="364"/>
        <end position="403"/>
    </location>
</feature>
<feature type="region of interest" description="Disordered" evidence="1">
    <location>
        <begin position="516"/>
        <end position="616"/>
    </location>
</feature>
<feature type="region of interest" description="Disordered" evidence="1">
    <location>
        <begin position="697"/>
        <end position="785"/>
    </location>
</feature>
<feature type="compositionally biased region" description="Low complexity" evidence="1">
    <location>
        <begin position="368"/>
        <end position="383"/>
    </location>
</feature>
<feature type="compositionally biased region" description="Polar residues" evidence="1">
    <location>
        <begin position="391"/>
        <end position="403"/>
    </location>
</feature>
<feature type="compositionally biased region" description="Polar residues" evidence="1">
    <location>
        <begin position="516"/>
        <end position="528"/>
    </location>
</feature>
<feature type="compositionally biased region" description="Low complexity" evidence="1">
    <location>
        <begin position="529"/>
        <end position="545"/>
    </location>
</feature>
<feature type="compositionally biased region" description="Low complexity" evidence="1">
    <location>
        <begin position="573"/>
        <end position="616"/>
    </location>
</feature>
<feature type="compositionally biased region" description="Gly residues" evidence="1">
    <location>
        <begin position="724"/>
        <end position="740"/>
    </location>
</feature>
<feature type="compositionally biased region" description="Low complexity" evidence="1">
    <location>
        <begin position="741"/>
        <end position="758"/>
    </location>
</feature>
<feature type="compositionally biased region" description="Polar residues" evidence="1">
    <location>
        <begin position="775"/>
        <end position="785"/>
    </location>
</feature>
<feature type="strand" evidence="12">
    <location>
        <begin position="9"/>
        <end position="12"/>
    </location>
</feature>
<feature type="helix" evidence="12">
    <location>
        <begin position="17"/>
        <end position="28"/>
    </location>
</feature>
<feature type="helix" evidence="12">
    <location>
        <begin position="41"/>
        <end position="43"/>
    </location>
</feature>
<feature type="helix" evidence="12">
    <location>
        <begin position="44"/>
        <end position="47"/>
    </location>
</feature>
<feature type="strand" evidence="12">
    <location>
        <begin position="52"/>
        <end position="57"/>
    </location>
</feature>
<feature type="helix" evidence="12">
    <location>
        <begin position="58"/>
        <end position="61"/>
    </location>
</feature>
<feature type="strand" evidence="12">
    <location>
        <begin position="76"/>
        <end position="78"/>
    </location>
</feature>
<feature type="strand" evidence="12">
    <location>
        <begin position="81"/>
        <end position="86"/>
    </location>
</feature>
<feature type="strand" evidence="12">
    <location>
        <begin position="205"/>
        <end position="214"/>
    </location>
</feature>
<feature type="turn" evidence="12">
    <location>
        <begin position="215"/>
        <end position="219"/>
    </location>
</feature>
<feature type="strand" evidence="12">
    <location>
        <begin position="221"/>
        <end position="223"/>
    </location>
</feature>
<feature type="strand" evidence="12">
    <location>
        <begin position="226"/>
        <end position="235"/>
    </location>
</feature>
<feature type="helix" evidence="12">
    <location>
        <begin position="238"/>
        <end position="241"/>
    </location>
</feature>
<feature type="strand" evidence="13">
    <location>
        <begin position="243"/>
        <end position="245"/>
    </location>
</feature>
<feature type="helix" evidence="13">
    <location>
        <begin position="248"/>
        <end position="250"/>
    </location>
</feature>
<feature type="helix" evidence="12">
    <location>
        <begin position="251"/>
        <end position="253"/>
    </location>
</feature>
<feature type="helix" evidence="12">
    <location>
        <begin position="260"/>
        <end position="267"/>
    </location>
</feature>